<organism>
    <name type="scientific">Escherichia coli (strain ATCC 8739 / DSM 1576 / NBRC 3972 / NCIMB 8545 / WDCM 00012 / Crooks)</name>
    <dbReference type="NCBI Taxonomy" id="481805"/>
    <lineage>
        <taxon>Bacteria</taxon>
        <taxon>Pseudomonadati</taxon>
        <taxon>Pseudomonadota</taxon>
        <taxon>Gammaproteobacteria</taxon>
        <taxon>Enterobacterales</taxon>
        <taxon>Enterobacteriaceae</taxon>
        <taxon>Escherichia</taxon>
    </lineage>
</organism>
<name>KAD_ECOLC</name>
<feature type="chain" id="PRO_1000078273" description="Adenylate kinase">
    <location>
        <begin position="1"/>
        <end position="214"/>
    </location>
</feature>
<feature type="region of interest" description="NMP" evidence="2">
    <location>
        <begin position="30"/>
        <end position="59"/>
    </location>
</feature>
<feature type="region of interest" description="LID">
    <location>
        <begin position="122"/>
        <end position="159"/>
    </location>
</feature>
<feature type="binding site" evidence="2">
    <location>
        <begin position="10"/>
        <end position="15"/>
    </location>
    <ligand>
        <name>ATP</name>
        <dbReference type="ChEBI" id="CHEBI:30616"/>
    </ligand>
</feature>
<feature type="binding site" evidence="2">
    <location>
        <position position="31"/>
    </location>
    <ligand>
        <name>AMP</name>
        <dbReference type="ChEBI" id="CHEBI:456215"/>
    </ligand>
</feature>
<feature type="binding site" evidence="2">
    <location>
        <position position="36"/>
    </location>
    <ligand>
        <name>AMP</name>
        <dbReference type="ChEBI" id="CHEBI:456215"/>
    </ligand>
</feature>
<feature type="binding site" evidence="2">
    <location>
        <begin position="57"/>
        <end position="59"/>
    </location>
    <ligand>
        <name>AMP</name>
        <dbReference type="ChEBI" id="CHEBI:456215"/>
    </ligand>
</feature>
<feature type="binding site" evidence="2">
    <location>
        <begin position="85"/>
        <end position="88"/>
    </location>
    <ligand>
        <name>AMP</name>
        <dbReference type="ChEBI" id="CHEBI:456215"/>
    </ligand>
</feature>
<feature type="binding site" evidence="2">
    <location>
        <position position="92"/>
    </location>
    <ligand>
        <name>AMP</name>
        <dbReference type="ChEBI" id="CHEBI:456215"/>
    </ligand>
</feature>
<feature type="binding site" evidence="2">
    <location>
        <position position="123"/>
    </location>
    <ligand>
        <name>ATP</name>
        <dbReference type="ChEBI" id="CHEBI:30616"/>
    </ligand>
</feature>
<feature type="binding site" evidence="2">
    <location>
        <begin position="132"/>
        <end position="133"/>
    </location>
    <ligand>
        <name>ATP</name>
        <dbReference type="ChEBI" id="CHEBI:30616"/>
    </ligand>
</feature>
<feature type="binding site" evidence="2">
    <location>
        <position position="156"/>
    </location>
    <ligand>
        <name>AMP</name>
        <dbReference type="ChEBI" id="CHEBI:456215"/>
    </ligand>
</feature>
<feature type="binding site" evidence="2">
    <location>
        <position position="167"/>
    </location>
    <ligand>
        <name>AMP</name>
        <dbReference type="ChEBI" id="CHEBI:456215"/>
    </ligand>
</feature>
<feature type="binding site" evidence="2">
    <location>
        <position position="200"/>
    </location>
    <ligand>
        <name>ATP</name>
        <dbReference type="ChEBI" id="CHEBI:30616"/>
    </ligand>
</feature>
<feature type="modified residue" description="N6-acetyllysine" evidence="1">
    <location>
        <position position="192"/>
    </location>
</feature>
<proteinExistence type="inferred from homology"/>
<keyword id="KW-0007">Acetylation</keyword>
<keyword id="KW-0067">ATP-binding</keyword>
<keyword id="KW-0963">Cytoplasm</keyword>
<keyword id="KW-0418">Kinase</keyword>
<keyword id="KW-0545">Nucleotide biosynthesis</keyword>
<keyword id="KW-0547">Nucleotide-binding</keyword>
<keyword id="KW-0808">Transferase</keyword>
<accession>B1IZC0</accession>
<dbReference type="EC" id="2.7.4.3" evidence="2"/>
<dbReference type="EMBL" id="CP000946">
    <property type="protein sequence ID" value="ACA78765.1"/>
    <property type="molecule type" value="Genomic_DNA"/>
</dbReference>
<dbReference type="RefSeq" id="WP_001220233.1">
    <property type="nucleotide sequence ID" value="NZ_MTFT01000020.1"/>
</dbReference>
<dbReference type="BMRB" id="B1IZC0"/>
<dbReference type="SMR" id="B1IZC0"/>
<dbReference type="GeneID" id="75170492"/>
<dbReference type="KEGG" id="ecl:EcolC_3142"/>
<dbReference type="HOGENOM" id="CLU_032354_1_2_6"/>
<dbReference type="UniPathway" id="UPA00588">
    <property type="reaction ID" value="UER00649"/>
</dbReference>
<dbReference type="GO" id="GO:0005737">
    <property type="term" value="C:cytoplasm"/>
    <property type="evidence" value="ECO:0007669"/>
    <property type="project" value="UniProtKB-SubCell"/>
</dbReference>
<dbReference type="GO" id="GO:0004017">
    <property type="term" value="F:adenylate kinase activity"/>
    <property type="evidence" value="ECO:0007669"/>
    <property type="project" value="UniProtKB-UniRule"/>
</dbReference>
<dbReference type="GO" id="GO:0005524">
    <property type="term" value="F:ATP binding"/>
    <property type="evidence" value="ECO:0007669"/>
    <property type="project" value="UniProtKB-UniRule"/>
</dbReference>
<dbReference type="GO" id="GO:0044209">
    <property type="term" value="P:AMP salvage"/>
    <property type="evidence" value="ECO:0007669"/>
    <property type="project" value="UniProtKB-UniRule"/>
</dbReference>
<dbReference type="CDD" id="cd01428">
    <property type="entry name" value="ADK"/>
    <property type="match status" value="1"/>
</dbReference>
<dbReference type="FunFam" id="3.40.50.300:FF:000106">
    <property type="entry name" value="Adenylate kinase mitochondrial"/>
    <property type="match status" value="1"/>
</dbReference>
<dbReference type="Gene3D" id="3.40.50.300">
    <property type="entry name" value="P-loop containing nucleotide triphosphate hydrolases"/>
    <property type="match status" value="1"/>
</dbReference>
<dbReference type="HAMAP" id="MF_00235">
    <property type="entry name" value="Adenylate_kinase_Adk"/>
    <property type="match status" value="1"/>
</dbReference>
<dbReference type="InterPro" id="IPR006259">
    <property type="entry name" value="Adenyl_kin_sub"/>
</dbReference>
<dbReference type="InterPro" id="IPR000850">
    <property type="entry name" value="Adenylat/UMP-CMP_kin"/>
</dbReference>
<dbReference type="InterPro" id="IPR033690">
    <property type="entry name" value="Adenylat_kinase_CS"/>
</dbReference>
<dbReference type="InterPro" id="IPR007862">
    <property type="entry name" value="Adenylate_kinase_lid-dom"/>
</dbReference>
<dbReference type="InterPro" id="IPR027417">
    <property type="entry name" value="P-loop_NTPase"/>
</dbReference>
<dbReference type="NCBIfam" id="TIGR01351">
    <property type="entry name" value="adk"/>
    <property type="match status" value="1"/>
</dbReference>
<dbReference type="NCBIfam" id="NF001379">
    <property type="entry name" value="PRK00279.1-1"/>
    <property type="match status" value="1"/>
</dbReference>
<dbReference type="NCBIfam" id="NF001380">
    <property type="entry name" value="PRK00279.1-2"/>
    <property type="match status" value="1"/>
</dbReference>
<dbReference type="NCBIfam" id="NF001381">
    <property type="entry name" value="PRK00279.1-3"/>
    <property type="match status" value="1"/>
</dbReference>
<dbReference type="NCBIfam" id="NF011100">
    <property type="entry name" value="PRK14527.1"/>
    <property type="match status" value="1"/>
</dbReference>
<dbReference type="PANTHER" id="PTHR23359">
    <property type="entry name" value="NUCLEOTIDE KINASE"/>
    <property type="match status" value="1"/>
</dbReference>
<dbReference type="Pfam" id="PF00406">
    <property type="entry name" value="ADK"/>
    <property type="match status" value="1"/>
</dbReference>
<dbReference type="Pfam" id="PF05191">
    <property type="entry name" value="ADK_lid"/>
    <property type="match status" value="1"/>
</dbReference>
<dbReference type="PRINTS" id="PR00094">
    <property type="entry name" value="ADENYLTKNASE"/>
</dbReference>
<dbReference type="SUPFAM" id="SSF52540">
    <property type="entry name" value="P-loop containing nucleoside triphosphate hydrolases"/>
    <property type="match status" value="1"/>
</dbReference>
<dbReference type="PROSITE" id="PS00113">
    <property type="entry name" value="ADENYLATE_KINASE"/>
    <property type="match status" value="1"/>
</dbReference>
<comment type="function">
    <text evidence="2">Catalyzes the reversible transfer of the terminal phosphate group between ATP and AMP. Plays an important role in cellular energy homeostasis and in adenine nucleotide metabolism.</text>
</comment>
<comment type="catalytic activity">
    <reaction evidence="2">
        <text>AMP + ATP = 2 ADP</text>
        <dbReference type="Rhea" id="RHEA:12973"/>
        <dbReference type="ChEBI" id="CHEBI:30616"/>
        <dbReference type="ChEBI" id="CHEBI:456215"/>
        <dbReference type="ChEBI" id="CHEBI:456216"/>
        <dbReference type="EC" id="2.7.4.3"/>
    </reaction>
</comment>
<comment type="pathway">
    <text evidence="2">Purine metabolism; AMP biosynthesis via salvage pathway; AMP from ADP: step 1/1.</text>
</comment>
<comment type="subunit">
    <text evidence="2">Monomer.</text>
</comment>
<comment type="subcellular location">
    <subcellularLocation>
        <location evidence="2">Cytoplasm</location>
    </subcellularLocation>
</comment>
<comment type="domain">
    <text evidence="2">Consists of three domains, a large central CORE domain and two small peripheral domains, NMPbind and LID, which undergo movements during catalysis. The LID domain closes over the site of phosphoryl transfer upon ATP binding. Assembling and dissambling the active center during each catalytic cycle provides an effective means to prevent ATP hydrolysis.</text>
</comment>
<comment type="similarity">
    <text evidence="2">Belongs to the adenylate kinase family.</text>
</comment>
<reference key="1">
    <citation type="submission" date="2008-02" db="EMBL/GenBank/DDBJ databases">
        <title>Complete sequence of Escherichia coli C str. ATCC 8739.</title>
        <authorList>
            <person name="Copeland A."/>
            <person name="Lucas S."/>
            <person name="Lapidus A."/>
            <person name="Glavina del Rio T."/>
            <person name="Dalin E."/>
            <person name="Tice H."/>
            <person name="Bruce D."/>
            <person name="Goodwin L."/>
            <person name="Pitluck S."/>
            <person name="Kiss H."/>
            <person name="Brettin T."/>
            <person name="Detter J.C."/>
            <person name="Han C."/>
            <person name="Kuske C.R."/>
            <person name="Schmutz J."/>
            <person name="Larimer F."/>
            <person name="Land M."/>
            <person name="Hauser L."/>
            <person name="Kyrpides N."/>
            <person name="Mikhailova N."/>
            <person name="Ingram L."/>
            <person name="Richardson P."/>
        </authorList>
    </citation>
    <scope>NUCLEOTIDE SEQUENCE [LARGE SCALE GENOMIC DNA]</scope>
    <source>
        <strain>ATCC 8739 / DSM 1576 / NBRC 3972 / NCIMB 8545 / WDCM 00012 / Crooks</strain>
    </source>
</reference>
<evidence type="ECO:0000250" key="1"/>
<evidence type="ECO:0000255" key="2">
    <source>
        <dbReference type="HAMAP-Rule" id="MF_00235"/>
    </source>
</evidence>
<protein>
    <recommendedName>
        <fullName evidence="2">Adenylate kinase</fullName>
        <shortName evidence="2">AK</shortName>
        <ecNumber evidence="2">2.7.4.3</ecNumber>
    </recommendedName>
    <alternativeName>
        <fullName evidence="2">ATP-AMP transphosphorylase</fullName>
    </alternativeName>
    <alternativeName>
        <fullName evidence="2">ATP:AMP phosphotransferase</fullName>
    </alternativeName>
    <alternativeName>
        <fullName evidence="2">Adenylate monophosphate kinase</fullName>
    </alternativeName>
</protein>
<gene>
    <name evidence="2" type="primary">adk</name>
    <name type="ordered locus">EcolC_3142</name>
</gene>
<sequence>MRIILLGAPGAGKGTQAQFIMEKYGIPQISTGDMLRAAVKSGSELGKQAKDIMDAGKLVTDELVIALVKERIAQEDCRNGFLLDGFPRTIPQADAMKEAGINVDYVLEFDVPDELIVDRIVGRRVHAPSGRVYHVKFNPPKVEGKDDVTGEELTTRKDDQEETVRKRLVEYHQMTAPLIGYYSKEAEAGNTKYAKVDGTKPVAEVRADLEKILG</sequence>